<protein>
    <recommendedName>
        <fullName>High mobility group protein DSP1</fullName>
    </recommendedName>
    <alternativeName>
        <fullName>Protein dorsal switch 1</fullName>
    </alternativeName>
</protein>
<keyword id="KW-0025">Alternative splicing</keyword>
<keyword id="KW-0158">Chromosome</keyword>
<keyword id="KW-0238">DNA-binding</keyword>
<keyword id="KW-0539">Nucleus</keyword>
<keyword id="KW-1185">Reference proteome</keyword>
<keyword id="KW-0677">Repeat</keyword>
<evidence type="ECO:0000255" key="1">
    <source>
        <dbReference type="PROSITE-ProRule" id="PRU00267"/>
    </source>
</evidence>
<evidence type="ECO:0000256" key="2">
    <source>
        <dbReference type="SAM" id="MobiDB-lite"/>
    </source>
</evidence>
<evidence type="ECO:0000303" key="3">
    <source>
    </source>
</evidence>
<evidence type="ECO:0000305" key="4"/>
<accession>Q24537</accession>
<accession>A4V4L8</accession>
<accession>Q23998</accession>
<accession>Q24285</accession>
<accession>Q95SD7</accession>
<proteinExistence type="evidence at transcript level"/>
<organism>
    <name type="scientific">Drosophila melanogaster</name>
    <name type="common">Fruit fly</name>
    <dbReference type="NCBI Taxonomy" id="7227"/>
    <lineage>
        <taxon>Eukaryota</taxon>
        <taxon>Metazoa</taxon>
        <taxon>Ecdysozoa</taxon>
        <taxon>Arthropoda</taxon>
        <taxon>Hexapoda</taxon>
        <taxon>Insecta</taxon>
        <taxon>Pterygota</taxon>
        <taxon>Neoptera</taxon>
        <taxon>Endopterygota</taxon>
        <taxon>Diptera</taxon>
        <taxon>Brachycera</taxon>
        <taxon>Muscomorpha</taxon>
        <taxon>Ephydroidea</taxon>
        <taxon>Drosophilidae</taxon>
        <taxon>Drosophila</taxon>
        <taxon>Sophophora</taxon>
    </lineage>
</organism>
<dbReference type="EMBL" id="U13881">
    <property type="protein sequence ID" value="AAA50238.1"/>
    <property type="molecule type" value="mRNA"/>
</dbReference>
<dbReference type="EMBL" id="X89811">
    <property type="protein sequence ID" value="CAA61938.1"/>
    <property type="molecule type" value="Genomic_DNA"/>
</dbReference>
<dbReference type="EMBL" id="X81456">
    <property type="protein sequence ID" value="CAA57212.1"/>
    <property type="status" value="ALT_FRAME"/>
    <property type="molecule type" value="mRNA"/>
</dbReference>
<dbReference type="EMBL" id="AE014298">
    <property type="protein sequence ID" value="AAF48594.2"/>
    <property type="molecule type" value="Genomic_DNA"/>
</dbReference>
<dbReference type="EMBL" id="AE014298">
    <property type="protein sequence ID" value="AAN09394.2"/>
    <property type="molecule type" value="Genomic_DNA"/>
</dbReference>
<dbReference type="EMBL" id="AE014298">
    <property type="protein sequence ID" value="AAN09395.1"/>
    <property type="molecule type" value="Genomic_DNA"/>
</dbReference>
<dbReference type="EMBL" id="AE014298">
    <property type="protein sequence ID" value="AAN09396.1"/>
    <property type="molecule type" value="Genomic_DNA"/>
</dbReference>
<dbReference type="EMBL" id="AE014298">
    <property type="protein sequence ID" value="AAS65386.1"/>
    <property type="molecule type" value="Genomic_DNA"/>
</dbReference>
<dbReference type="EMBL" id="AY060841">
    <property type="protein sequence ID" value="AAL28389.1"/>
    <property type="molecule type" value="mRNA"/>
</dbReference>
<dbReference type="PIR" id="JC6179">
    <property type="entry name" value="JC6179"/>
</dbReference>
<dbReference type="PIR" id="S50068">
    <property type="entry name" value="S50068"/>
</dbReference>
<dbReference type="RefSeq" id="NP_001285322.1">
    <molecule id="Q24537-2"/>
    <property type="nucleotide sequence ID" value="NM_001298393.1"/>
</dbReference>
<dbReference type="RefSeq" id="NP_542446.2">
    <molecule id="Q24537-3"/>
    <property type="nucleotide sequence ID" value="NM_080715.4"/>
</dbReference>
<dbReference type="RefSeq" id="NP_727959.2">
    <molecule id="Q24537-2"/>
    <property type="nucleotide sequence ID" value="NM_167502.3"/>
</dbReference>
<dbReference type="RefSeq" id="NP_727960.1">
    <molecule id="Q24537-3"/>
    <property type="nucleotide sequence ID" value="NM_167503.3"/>
</dbReference>
<dbReference type="RefSeq" id="NP_727961.1">
    <molecule id="Q24537-3"/>
    <property type="nucleotide sequence ID" value="NM_167504.2"/>
</dbReference>
<dbReference type="RefSeq" id="NP_996485.1">
    <molecule id="Q24537-1"/>
    <property type="nucleotide sequence ID" value="NM_206762.3"/>
</dbReference>
<dbReference type="SMR" id="Q24537"/>
<dbReference type="BioGRID" id="72866">
    <property type="interactions" value="31"/>
</dbReference>
<dbReference type="DIP" id="DIP-29511N"/>
<dbReference type="FunCoup" id="Q24537">
    <property type="interactions" value="373"/>
</dbReference>
<dbReference type="IntAct" id="Q24537">
    <property type="interactions" value="11"/>
</dbReference>
<dbReference type="STRING" id="7227.FBpp0288398"/>
<dbReference type="PaxDb" id="7227-FBpp0288398"/>
<dbReference type="DNASU" id="117294"/>
<dbReference type="EnsemblMetazoa" id="FBtr0089259">
    <molecule id="Q24537-3"/>
    <property type="protein sequence ID" value="FBpp0088318"/>
    <property type="gene ID" value="FBgn0278608"/>
</dbReference>
<dbReference type="EnsemblMetazoa" id="FBtr0089260">
    <molecule id="Q24537-3"/>
    <property type="protein sequence ID" value="FBpp0088319"/>
    <property type="gene ID" value="FBgn0278608"/>
</dbReference>
<dbReference type="EnsemblMetazoa" id="FBtr0089261">
    <molecule id="Q24537-3"/>
    <property type="protein sequence ID" value="FBpp0088320"/>
    <property type="gene ID" value="FBgn0278608"/>
</dbReference>
<dbReference type="EnsemblMetazoa" id="FBtr0089262">
    <molecule id="Q24537-2"/>
    <property type="protein sequence ID" value="FBpp0089257"/>
    <property type="gene ID" value="FBgn0278608"/>
</dbReference>
<dbReference type="EnsemblMetazoa" id="FBtr0089263">
    <molecule id="Q24537-1"/>
    <property type="protein sequence ID" value="FBpp0089258"/>
    <property type="gene ID" value="FBgn0278608"/>
</dbReference>
<dbReference type="EnsemblMetazoa" id="FBtr0339766">
    <molecule id="Q24537-2"/>
    <property type="protein sequence ID" value="FBpp0308813"/>
    <property type="gene ID" value="FBgn0278608"/>
</dbReference>
<dbReference type="GeneID" id="117294"/>
<dbReference type="KEGG" id="dme:Dmel_CG12223"/>
<dbReference type="UCSC" id="CG12223-RB">
    <property type="organism name" value="d. melanogaster"/>
</dbReference>
<dbReference type="AGR" id="FB:FBgn0278608"/>
<dbReference type="CTD" id="117294"/>
<dbReference type="FlyBase" id="FBgn0278608">
    <property type="gene designation" value="Dsp1"/>
</dbReference>
<dbReference type="VEuPathDB" id="VectorBase:FBgn0278608"/>
<dbReference type="eggNOG" id="KOG0381">
    <property type="taxonomic scope" value="Eukaryota"/>
</dbReference>
<dbReference type="GeneTree" id="ENSGT00940000153299"/>
<dbReference type="InParanoid" id="Q24537"/>
<dbReference type="OrthoDB" id="1919336at2759"/>
<dbReference type="Reactome" id="R-DME-140342">
    <property type="pathway name" value="Apoptosis induced DNA fragmentation"/>
</dbReference>
<dbReference type="Reactome" id="R-DME-209394">
    <property type="pathway name" value="Transcriptional activtion and repression of REL-68 target genes"/>
</dbReference>
<dbReference type="Reactome" id="R-DME-5620971">
    <property type="pathway name" value="Pyroptosis"/>
</dbReference>
<dbReference type="Reactome" id="R-DME-5686938">
    <property type="pathway name" value="Regulation of TLR by endogenous ligand"/>
</dbReference>
<dbReference type="Reactome" id="R-DME-6798695">
    <property type="pathway name" value="Neutrophil degranulation"/>
</dbReference>
<dbReference type="SignaLink" id="Q24537"/>
<dbReference type="BioGRID-ORCS" id="117294">
    <property type="hits" value="1 hit in 3 CRISPR screens"/>
</dbReference>
<dbReference type="ChiTaRS" id="Dsp1">
    <property type="organism name" value="fly"/>
</dbReference>
<dbReference type="GenomeRNAi" id="117294"/>
<dbReference type="PRO" id="PR:Q24537"/>
<dbReference type="Proteomes" id="UP000000803">
    <property type="component" value="Chromosome X"/>
</dbReference>
<dbReference type="Bgee" id="FBgn0278608">
    <property type="expression patterns" value="Expressed in posterior terminal follicle cell in ovary and 299 other cell types or tissues"/>
</dbReference>
<dbReference type="ExpressionAtlas" id="Q24537">
    <property type="expression patterns" value="baseline and differential"/>
</dbReference>
<dbReference type="GO" id="GO:0005654">
    <property type="term" value="C:nucleoplasm"/>
    <property type="evidence" value="ECO:0000304"/>
    <property type="project" value="Reactome"/>
</dbReference>
<dbReference type="GO" id="GO:0005634">
    <property type="term" value="C:nucleus"/>
    <property type="evidence" value="ECO:0000314"/>
    <property type="project" value="FlyBase"/>
</dbReference>
<dbReference type="GO" id="GO:0005700">
    <property type="term" value="C:polytene chromosome"/>
    <property type="evidence" value="ECO:0000314"/>
    <property type="project" value="FlyBase"/>
</dbReference>
<dbReference type="GO" id="GO:0003677">
    <property type="term" value="F:DNA binding"/>
    <property type="evidence" value="ECO:0000314"/>
    <property type="project" value="FlyBase"/>
</dbReference>
<dbReference type="GO" id="GO:0008301">
    <property type="term" value="F:DNA binding, bending"/>
    <property type="evidence" value="ECO:0000314"/>
    <property type="project" value="FlyBase"/>
</dbReference>
<dbReference type="GO" id="GO:0140297">
    <property type="term" value="F:DNA-binding transcription factor binding"/>
    <property type="evidence" value="ECO:0000353"/>
    <property type="project" value="FlyBase"/>
</dbReference>
<dbReference type="GO" id="GO:0003697">
    <property type="term" value="F:single-stranded DNA binding"/>
    <property type="evidence" value="ECO:0000303"/>
    <property type="project" value="UniProtKB"/>
</dbReference>
<dbReference type="GO" id="GO:0017025">
    <property type="term" value="F:TBP-class protein binding"/>
    <property type="evidence" value="ECO:0000353"/>
    <property type="project" value="FlyBase"/>
</dbReference>
<dbReference type="GO" id="GO:0006338">
    <property type="term" value="P:chromatin remodeling"/>
    <property type="evidence" value="ECO:0000315"/>
    <property type="project" value="FlyBase"/>
</dbReference>
<dbReference type="GO" id="GO:0032502">
    <property type="term" value="P:developmental process"/>
    <property type="evidence" value="ECO:0000315"/>
    <property type="project" value="FlyBase"/>
</dbReference>
<dbReference type="GO" id="GO:0035218">
    <property type="term" value="P:leg disc development"/>
    <property type="evidence" value="ECO:0000315"/>
    <property type="project" value="FlyBase"/>
</dbReference>
<dbReference type="GO" id="GO:0008348">
    <property type="term" value="P:negative regulation of antimicrobial humoral response"/>
    <property type="evidence" value="ECO:0000315"/>
    <property type="project" value="FlyBase"/>
</dbReference>
<dbReference type="GO" id="GO:0045892">
    <property type="term" value="P:negative regulation of DNA-templated transcription"/>
    <property type="evidence" value="ECO:0000314"/>
    <property type="project" value="BHF-UCL"/>
</dbReference>
<dbReference type="GO" id="GO:0017055">
    <property type="term" value="P:negative regulation of RNA polymerase II transcription preinitiation complex assembly"/>
    <property type="evidence" value="ECO:0000314"/>
    <property type="project" value="FlyBase"/>
</dbReference>
<dbReference type="GO" id="GO:0000122">
    <property type="term" value="P:negative regulation of transcription by RNA polymerase II"/>
    <property type="evidence" value="ECO:0000314"/>
    <property type="project" value="FlyBase"/>
</dbReference>
<dbReference type="GO" id="GO:0007379">
    <property type="term" value="P:segment specification"/>
    <property type="evidence" value="ECO:0000315"/>
    <property type="project" value="FlyBase"/>
</dbReference>
<dbReference type="CDD" id="cd21978">
    <property type="entry name" value="HMG-box_HMGB_rpt1"/>
    <property type="match status" value="1"/>
</dbReference>
<dbReference type="FunFam" id="1.10.30.10:FF:000016">
    <property type="entry name" value="FACT complex subunit SSRP1"/>
    <property type="match status" value="1"/>
</dbReference>
<dbReference type="FunFam" id="1.10.30.10:FF:000013">
    <property type="entry name" value="High mobility group protein B3"/>
    <property type="match status" value="1"/>
</dbReference>
<dbReference type="Gene3D" id="1.10.30.10">
    <property type="entry name" value="High mobility group box domain"/>
    <property type="match status" value="2"/>
</dbReference>
<dbReference type="InterPro" id="IPR009071">
    <property type="entry name" value="HMG_box_dom"/>
</dbReference>
<dbReference type="InterPro" id="IPR036910">
    <property type="entry name" value="HMG_box_dom_sf"/>
</dbReference>
<dbReference type="InterPro" id="IPR017967">
    <property type="entry name" value="HMG_boxA_CS"/>
</dbReference>
<dbReference type="InterPro" id="IPR050342">
    <property type="entry name" value="HMGB"/>
</dbReference>
<dbReference type="PANTHER" id="PTHR48112:SF32">
    <property type="entry name" value="HIGH MOBILITY GROUP PROTEIN B3"/>
    <property type="match status" value="1"/>
</dbReference>
<dbReference type="PANTHER" id="PTHR48112">
    <property type="entry name" value="HIGH MOBILITY GROUP PROTEIN DSP1"/>
    <property type="match status" value="1"/>
</dbReference>
<dbReference type="Pfam" id="PF00505">
    <property type="entry name" value="HMG_box"/>
    <property type="match status" value="1"/>
</dbReference>
<dbReference type="Pfam" id="PF09011">
    <property type="entry name" value="HMG_box_2"/>
    <property type="match status" value="1"/>
</dbReference>
<dbReference type="PRINTS" id="PR00886">
    <property type="entry name" value="HIGHMOBLTY12"/>
</dbReference>
<dbReference type="SMART" id="SM00398">
    <property type="entry name" value="HMG"/>
    <property type="match status" value="2"/>
</dbReference>
<dbReference type="SUPFAM" id="SSF47095">
    <property type="entry name" value="HMG-box"/>
    <property type="match status" value="2"/>
</dbReference>
<dbReference type="PROSITE" id="PS00353">
    <property type="entry name" value="HMG_BOX_1"/>
    <property type="match status" value="1"/>
</dbReference>
<dbReference type="PROSITE" id="PS50118">
    <property type="entry name" value="HMG_BOX_2"/>
    <property type="match status" value="2"/>
</dbReference>
<feature type="chain" id="PRO_0000048543" description="High mobility group protein DSP1">
    <location>
        <begin position="1"/>
        <end position="393"/>
    </location>
</feature>
<feature type="DNA-binding region" description="HMG box 1" evidence="1">
    <location>
        <begin position="179"/>
        <end position="249"/>
    </location>
</feature>
<feature type="DNA-binding region" description="HMG box 2" evidence="1">
    <location>
        <begin position="271"/>
        <end position="339"/>
    </location>
</feature>
<feature type="region of interest" description="Disordered" evidence="2">
    <location>
        <begin position="153"/>
        <end position="179"/>
    </location>
</feature>
<feature type="region of interest" description="Disordered" evidence="2">
    <location>
        <begin position="364"/>
        <end position="393"/>
    </location>
</feature>
<feature type="compositionally biased region" description="Low complexity" evidence="2">
    <location>
        <begin position="364"/>
        <end position="374"/>
    </location>
</feature>
<feature type="compositionally biased region" description="Acidic residues" evidence="2">
    <location>
        <begin position="379"/>
        <end position="393"/>
    </location>
</feature>
<feature type="splice variant" id="VSP_002184" description="In isoform A." evidence="3">
    <location>
        <begin position="8"/>
        <end position="15"/>
    </location>
</feature>
<feature type="splice variant" id="VSP_002183" description="In isoform D." evidence="4">
    <location>
        <begin position="8"/>
        <end position="14"/>
    </location>
</feature>
<feature type="sequence conflict" description="In Ref. 1; AAA50238." evidence="4" ref="1">
    <original>Q</original>
    <variation>T</variation>
    <location>
        <position position="129"/>
    </location>
</feature>
<feature type="sequence conflict" description="In Ref. 1; AAA50238." evidence="4" ref="1">
    <original>VVG</original>
    <variation>LWD</variation>
    <location>
        <begin position="255"/>
        <end position="257"/>
    </location>
</feature>
<feature type="sequence conflict" description="In Ref. 1; AAA50238." evidence="4" ref="1">
    <original>A</original>
    <variation>R</variation>
    <location>
        <position position="368"/>
    </location>
</feature>
<gene>
    <name type="primary">Dsp1</name>
    <name type="synonym">ssrp2</name>
    <name type="ORF">CG12223</name>
</gene>
<name>HMG2_DROME</name>
<sequence>MEHFHQIQQTIQHYQQQLAAQQQQQVQQQQLQQHQVVVQQNQQQAHQNSSNTTAGVGTQQLFTYKMASSFPNPATTMAQVVATSNAAGTTGYDYRLNMAQAAAAAAVPGSQWWYSAANQGQVDANTAAQLQHQQQQQQQQQQQQQQQHQQQQQMQQQQQQQNVINSASPMSRVKADAKPRGRMTAYAYFVQTCREEHKKKHPDETVIFAEFSRKCAERWKTMVDKEKKRFHEMAEKDKQRYEAEMQNYVPPKGAVVGRGKKRKQIKDPNAPKRSLSAFFWFCNDERNKVKALNPEFGVGDIAKELGRKWSDVDPEVKQKYESMAERDKARYEREMTEYKTSGKIAMSAPSMQASMQAQAQKAALLAAAAQQQHQQLEEQHDDDDGDGDDDENQ</sequence>
<comment type="function">
    <text>Binds preferentially single-stranded DNA and unwinds double-stranded DNA.</text>
</comment>
<comment type="subcellular location">
    <subcellularLocation>
        <location>Nucleus</location>
    </subcellularLocation>
    <subcellularLocation>
        <location>Chromosome</location>
    </subcellularLocation>
</comment>
<comment type="alternative products">
    <event type="alternative splicing"/>
    <isoform>
        <id>Q24537-1</id>
        <name>E</name>
        <sequence type="displayed"/>
    </isoform>
    <isoform>
        <id>Q24537-2</id>
        <name>D</name>
        <sequence type="described" ref="VSP_002183"/>
    </isoform>
    <isoform>
        <id>Q24537-3</id>
        <name>A</name>
        <name>B</name>
        <name>C</name>
        <sequence type="described" ref="VSP_002184"/>
    </isoform>
</comment>
<comment type="similarity">
    <text evidence="4">Belongs to the HMGB family.</text>
</comment>
<comment type="sequence caution" evidence="4">
    <conflict type="frameshift">
        <sequence resource="EMBL-CDS" id="CAA57212"/>
    </conflict>
</comment>
<reference key="1">
    <citation type="journal article" date="1994" name="Nature">
        <title>An HMG-like protein that can switch a transcriptional activator to a repressor.</title>
        <authorList>
            <person name="Lehming N."/>
            <person name="Thanos D."/>
            <person name="Brickman J.M."/>
            <person name="Ma J."/>
            <person name="Maniatis T."/>
            <person name="Ptashne M."/>
        </authorList>
    </citation>
    <scope>NUCLEOTIDE SEQUENCE [MRNA] (ISOFORM E)</scope>
    <source>
        <tissue>Embryo</tissue>
    </source>
</reference>
<reference key="2">
    <citation type="journal article" date="1997" name="Gene">
        <title>The Drosophila DSP1 gene encoding an HMG 1-like protein: genomic organization, evolutionary conservation and expression.</title>
        <authorList>
            <person name="Canaple L."/>
            <person name="Decoville M."/>
            <person name="Leng M."/>
            <person name="Locker D.L.D."/>
        </authorList>
    </citation>
    <scope>NUCLEOTIDE SEQUENCE [GENOMIC DNA] (ISOFORMS D AND E)</scope>
    <source>
        <strain>Canton-S</strain>
        <tissue>Embryo</tissue>
    </source>
</reference>
<reference key="3">
    <citation type="journal article" date="2000" name="Science">
        <title>The genome sequence of Drosophila melanogaster.</title>
        <authorList>
            <person name="Adams M.D."/>
            <person name="Celniker S.E."/>
            <person name="Holt R.A."/>
            <person name="Evans C.A."/>
            <person name="Gocayne J.D."/>
            <person name="Amanatides P.G."/>
            <person name="Scherer S.E."/>
            <person name="Li P.W."/>
            <person name="Hoskins R.A."/>
            <person name="Galle R.F."/>
            <person name="George R.A."/>
            <person name="Lewis S.E."/>
            <person name="Richards S."/>
            <person name="Ashburner M."/>
            <person name="Henderson S.N."/>
            <person name="Sutton G.G."/>
            <person name="Wortman J.R."/>
            <person name="Yandell M.D."/>
            <person name="Zhang Q."/>
            <person name="Chen L.X."/>
            <person name="Brandon R.C."/>
            <person name="Rogers Y.-H.C."/>
            <person name="Blazej R.G."/>
            <person name="Champe M."/>
            <person name="Pfeiffer B.D."/>
            <person name="Wan K.H."/>
            <person name="Doyle C."/>
            <person name="Baxter E.G."/>
            <person name="Helt G."/>
            <person name="Nelson C.R."/>
            <person name="Miklos G.L.G."/>
            <person name="Abril J.F."/>
            <person name="Agbayani A."/>
            <person name="An H.-J."/>
            <person name="Andrews-Pfannkoch C."/>
            <person name="Baldwin D."/>
            <person name="Ballew R.M."/>
            <person name="Basu A."/>
            <person name="Baxendale J."/>
            <person name="Bayraktaroglu L."/>
            <person name="Beasley E.M."/>
            <person name="Beeson K.Y."/>
            <person name="Benos P.V."/>
            <person name="Berman B.P."/>
            <person name="Bhandari D."/>
            <person name="Bolshakov S."/>
            <person name="Borkova D."/>
            <person name="Botchan M.R."/>
            <person name="Bouck J."/>
            <person name="Brokstein P."/>
            <person name="Brottier P."/>
            <person name="Burtis K.C."/>
            <person name="Busam D.A."/>
            <person name="Butler H."/>
            <person name="Cadieu E."/>
            <person name="Center A."/>
            <person name="Chandra I."/>
            <person name="Cherry J.M."/>
            <person name="Cawley S."/>
            <person name="Dahlke C."/>
            <person name="Davenport L.B."/>
            <person name="Davies P."/>
            <person name="de Pablos B."/>
            <person name="Delcher A."/>
            <person name="Deng Z."/>
            <person name="Mays A.D."/>
            <person name="Dew I."/>
            <person name="Dietz S.M."/>
            <person name="Dodson K."/>
            <person name="Doup L.E."/>
            <person name="Downes M."/>
            <person name="Dugan-Rocha S."/>
            <person name="Dunkov B.C."/>
            <person name="Dunn P."/>
            <person name="Durbin K.J."/>
            <person name="Evangelista C.C."/>
            <person name="Ferraz C."/>
            <person name="Ferriera S."/>
            <person name="Fleischmann W."/>
            <person name="Fosler C."/>
            <person name="Gabrielian A.E."/>
            <person name="Garg N.S."/>
            <person name="Gelbart W.M."/>
            <person name="Glasser K."/>
            <person name="Glodek A."/>
            <person name="Gong F."/>
            <person name="Gorrell J.H."/>
            <person name="Gu Z."/>
            <person name="Guan P."/>
            <person name="Harris M."/>
            <person name="Harris N.L."/>
            <person name="Harvey D.A."/>
            <person name="Heiman T.J."/>
            <person name="Hernandez J.R."/>
            <person name="Houck J."/>
            <person name="Hostin D."/>
            <person name="Houston K.A."/>
            <person name="Howland T.J."/>
            <person name="Wei M.-H."/>
            <person name="Ibegwam C."/>
            <person name="Jalali M."/>
            <person name="Kalush F."/>
            <person name="Karpen G.H."/>
            <person name="Ke Z."/>
            <person name="Kennison J.A."/>
            <person name="Ketchum K.A."/>
            <person name="Kimmel B.E."/>
            <person name="Kodira C.D."/>
            <person name="Kraft C.L."/>
            <person name="Kravitz S."/>
            <person name="Kulp D."/>
            <person name="Lai Z."/>
            <person name="Lasko P."/>
            <person name="Lei Y."/>
            <person name="Levitsky A.A."/>
            <person name="Li J.H."/>
            <person name="Li Z."/>
            <person name="Liang Y."/>
            <person name="Lin X."/>
            <person name="Liu X."/>
            <person name="Mattei B."/>
            <person name="McIntosh T.C."/>
            <person name="McLeod M.P."/>
            <person name="McPherson D."/>
            <person name="Merkulov G."/>
            <person name="Milshina N.V."/>
            <person name="Mobarry C."/>
            <person name="Morris J."/>
            <person name="Moshrefi A."/>
            <person name="Mount S.M."/>
            <person name="Moy M."/>
            <person name="Murphy B."/>
            <person name="Murphy L."/>
            <person name="Muzny D.M."/>
            <person name="Nelson D.L."/>
            <person name="Nelson D.R."/>
            <person name="Nelson K.A."/>
            <person name="Nixon K."/>
            <person name="Nusskern D.R."/>
            <person name="Pacleb J.M."/>
            <person name="Palazzolo M."/>
            <person name="Pittman G.S."/>
            <person name="Pan S."/>
            <person name="Pollard J."/>
            <person name="Puri V."/>
            <person name="Reese M.G."/>
            <person name="Reinert K."/>
            <person name="Remington K."/>
            <person name="Saunders R.D.C."/>
            <person name="Scheeler F."/>
            <person name="Shen H."/>
            <person name="Shue B.C."/>
            <person name="Siden-Kiamos I."/>
            <person name="Simpson M."/>
            <person name="Skupski M.P."/>
            <person name="Smith T.J."/>
            <person name="Spier E."/>
            <person name="Spradling A.C."/>
            <person name="Stapleton M."/>
            <person name="Strong R."/>
            <person name="Sun E."/>
            <person name="Svirskas R."/>
            <person name="Tector C."/>
            <person name="Turner R."/>
            <person name="Venter E."/>
            <person name="Wang A.H."/>
            <person name="Wang X."/>
            <person name="Wang Z.-Y."/>
            <person name="Wassarman D.A."/>
            <person name="Weinstock G.M."/>
            <person name="Weissenbach J."/>
            <person name="Williams S.M."/>
            <person name="Woodage T."/>
            <person name="Worley K.C."/>
            <person name="Wu D."/>
            <person name="Yang S."/>
            <person name="Yao Q.A."/>
            <person name="Ye J."/>
            <person name="Yeh R.-F."/>
            <person name="Zaveri J.S."/>
            <person name="Zhan M."/>
            <person name="Zhang G."/>
            <person name="Zhao Q."/>
            <person name="Zheng L."/>
            <person name="Zheng X.H."/>
            <person name="Zhong F.N."/>
            <person name="Zhong W."/>
            <person name="Zhou X."/>
            <person name="Zhu S.C."/>
            <person name="Zhu X."/>
            <person name="Smith H.O."/>
            <person name="Gibbs R.A."/>
            <person name="Myers E.W."/>
            <person name="Rubin G.M."/>
            <person name="Venter J.C."/>
        </authorList>
    </citation>
    <scope>NUCLEOTIDE SEQUENCE [LARGE SCALE GENOMIC DNA]</scope>
    <source>
        <strain>Berkeley</strain>
    </source>
</reference>
<reference key="4">
    <citation type="journal article" date="2002" name="Genome Biol.">
        <title>Annotation of the Drosophila melanogaster euchromatic genome: a systematic review.</title>
        <authorList>
            <person name="Misra S."/>
            <person name="Crosby M.A."/>
            <person name="Mungall C.J."/>
            <person name="Matthews B.B."/>
            <person name="Campbell K.S."/>
            <person name="Hradecky P."/>
            <person name="Huang Y."/>
            <person name="Kaminker J.S."/>
            <person name="Millburn G.H."/>
            <person name="Prochnik S.E."/>
            <person name="Smith C.D."/>
            <person name="Tupy J.L."/>
            <person name="Whitfield E.J."/>
            <person name="Bayraktaroglu L."/>
            <person name="Berman B.P."/>
            <person name="Bettencourt B.R."/>
            <person name="Celniker S.E."/>
            <person name="de Grey A.D.N.J."/>
            <person name="Drysdale R.A."/>
            <person name="Harris N.L."/>
            <person name="Richter J."/>
            <person name="Russo S."/>
            <person name="Schroeder A.J."/>
            <person name="Shu S.Q."/>
            <person name="Stapleton M."/>
            <person name="Yamada C."/>
            <person name="Ashburner M."/>
            <person name="Gelbart W.M."/>
            <person name="Rubin G.M."/>
            <person name="Lewis S.E."/>
        </authorList>
    </citation>
    <scope>GENOME REANNOTATION</scope>
    <scope>ALTERNATIVE SPLICING</scope>
    <source>
        <strain>Berkeley</strain>
    </source>
</reference>
<reference key="5">
    <citation type="journal article" date="2002" name="Genome Biol.">
        <title>A Drosophila full-length cDNA resource.</title>
        <authorList>
            <person name="Stapleton M."/>
            <person name="Carlson J.W."/>
            <person name="Brokstein P."/>
            <person name="Yu C."/>
            <person name="Champe M."/>
            <person name="George R.A."/>
            <person name="Guarin H."/>
            <person name="Kronmiller B."/>
            <person name="Pacleb J.M."/>
            <person name="Park S."/>
            <person name="Wan K.H."/>
            <person name="Rubin G.M."/>
            <person name="Celniker S.E."/>
        </authorList>
    </citation>
    <scope>NUCLEOTIDE SEQUENCE [LARGE SCALE MRNA] (ISOFORM A)</scope>
    <source>
        <strain>Berkeley</strain>
        <tissue>Ovary</tissue>
    </source>
</reference>